<comment type="function">
    <text evidence="1">Zinc phosphodiesterase, which displays some tRNA 3'-processing endonuclease activity. Probably involved in tRNA maturation, by removing a 3'-trailer from precursor tRNA.</text>
</comment>
<comment type="catalytic activity">
    <reaction evidence="1">
        <text>Endonucleolytic cleavage of RNA, removing extra 3' nucleotides from tRNA precursor, generating 3' termini of tRNAs. A 3'-hydroxy group is left at the tRNA terminus and a 5'-phosphoryl group is left at the trailer molecule.</text>
        <dbReference type="EC" id="3.1.26.11"/>
    </reaction>
</comment>
<comment type="cofactor">
    <cofactor evidence="1">
        <name>Zn(2+)</name>
        <dbReference type="ChEBI" id="CHEBI:29105"/>
    </cofactor>
    <text evidence="1">Binds 2 Zn(2+) ions.</text>
</comment>
<comment type="subunit">
    <text evidence="1">Homodimer.</text>
</comment>
<comment type="similarity">
    <text evidence="1">Belongs to the RNase Z family.</text>
</comment>
<dbReference type="EC" id="3.1.26.11" evidence="1"/>
<dbReference type="EMBL" id="CP000504">
    <property type="protein sequence ID" value="ABL87583.1"/>
    <property type="molecule type" value="Genomic_DNA"/>
</dbReference>
<dbReference type="RefSeq" id="WP_011762160.1">
    <property type="nucleotide sequence ID" value="NC_008701.1"/>
</dbReference>
<dbReference type="SMR" id="A1RRK1"/>
<dbReference type="STRING" id="384616.Pisl_0405"/>
<dbReference type="GeneID" id="4617215"/>
<dbReference type="KEGG" id="pis:Pisl_0405"/>
<dbReference type="eggNOG" id="arCOG00501">
    <property type="taxonomic scope" value="Archaea"/>
</dbReference>
<dbReference type="HOGENOM" id="CLU_031317_2_1_2"/>
<dbReference type="OrthoDB" id="85118at2157"/>
<dbReference type="Proteomes" id="UP000002595">
    <property type="component" value="Chromosome"/>
</dbReference>
<dbReference type="GO" id="GO:0042781">
    <property type="term" value="F:3'-tRNA processing endoribonuclease activity"/>
    <property type="evidence" value="ECO:0007669"/>
    <property type="project" value="UniProtKB-UniRule"/>
</dbReference>
<dbReference type="GO" id="GO:0008270">
    <property type="term" value="F:zinc ion binding"/>
    <property type="evidence" value="ECO:0007669"/>
    <property type="project" value="UniProtKB-UniRule"/>
</dbReference>
<dbReference type="Gene3D" id="3.60.15.10">
    <property type="entry name" value="Ribonuclease Z/Hydroxyacylglutathione hydrolase-like"/>
    <property type="match status" value="1"/>
</dbReference>
<dbReference type="HAMAP" id="MF_01818">
    <property type="entry name" value="RNase_Z_BN"/>
    <property type="match status" value="1"/>
</dbReference>
<dbReference type="InterPro" id="IPR001279">
    <property type="entry name" value="Metallo-B-lactamas"/>
</dbReference>
<dbReference type="InterPro" id="IPR036866">
    <property type="entry name" value="RibonucZ/Hydroxyglut_hydro"/>
</dbReference>
<dbReference type="InterPro" id="IPR013471">
    <property type="entry name" value="RNase_Z/BN"/>
</dbReference>
<dbReference type="PANTHER" id="PTHR46018">
    <property type="entry name" value="ZINC PHOSPHODIESTERASE ELAC PROTEIN 1"/>
    <property type="match status" value="1"/>
</dbReference>
<dbReference type="PANTHER" id="PTHR46018:SF2">
    <property type="entry name" value="ZINC PHOSPHODIESTERASE ELAC PROTEIN 1"/>
    <property type="match status" value="1"/>
</dbReference>
<dbReference type="Pfam" id="PF12706">
    <property type="entry name" value="Lactamase_B_2"/>
    <property type="match status" value="1"/>
</dbReference>
<dbReference type="SUPFAM" id="SSF56281">
    <property type="entry name" value="Metallo-hydrolase/oxidoreductase"/>
    <property type="match status" value="1"/>
</dbReference>
<gene>
    <name evidence="1" type="primary">rnz</name>
    <name type="ordered locus">Pisl_0405</name>
</gene>
<feature type="chain" id="PRO_1000070325" description="Ribonuclease Z">
    <location>
        <begin position="1"/>
        <end position="287"/>
    </location>
</feature>
<feature type="active site" description="Proton acceptor" evidence="1">
    <location>
        <position position="68"/>
    </location>
</feature>
<feature type="binding site" evidence="1">
    <location>
        <position position="64"/>
    </location>
    <ligand>
        <name>Zn(2+)</name>
        <dbReference type="ChEBI" id="CHEBI:29105"/>
        <label>1</label>
        <note>catalytic</note>
    </ligand>
</feature>
<feature type="binding site" evidence="1">
    <location>
        <position position="66"/>
    </location>
    <ligand>
        <name>Zn(2+)</name>
        <dbReference type="ChEBI" id="CHEBI:29105"/>
        <label>1</label>
        <note>catalytic</note>
    </ligand>
</feature>
<feature type="binding site" evidence="1">
    <location>
        <position position="68"/>
    </location>
    <ligand>
        <name>Zn(2+)</name>
        <dbReference type="ChEBI" id="CHEBI:29105"/>
        <label>2</label>
        <note>catalytic</note>
    </ligand>
</feature>
<feature type="binding site" evidence="1">
    <location>
        <position position="69"/>
    </location>
    <ligand>
        <name>Zn(2+)</name>
        <dbReference type="ChEBI" id="CHEBI:29105"/>
        <label>2</label>
        <note>catalytic</note>
    </ligand>
</feature>
<feature type="binding site" evidence="1">
    <location>
        <position position="124"/>
    </location>
    <ligand>
        <name>Zn(2+)</name>
        <dbReference type="ChEBI" id="CHEBI:29105"/>
        <label>1</label>
        <note>catalytic</note>
    </ligand>
</feature>
<feature type="binding site" evidence="1">
    <location>
        <position position="191"/>
    </location>
    <ligand>
        <name>Zn(2+)</name>
        <dbReference type="ChEBI" id="CHEBI:29105"/>
        <label>1</label>
        <note>catalytic</note>
    </ligand>
</feature>
<feature type="binding site" evidence="1">
    <location>
        <position position="191"/>
    </location>
    <ligand>
        <name>Zn(2+)</name>
        <dbReference type="ChEBI" id="CHEBI:29105"/>
        <label>2</label>
        <note>catalytic</note>
    </ligand>
</feature>
<feature type="binding site" evidence="1">
    <location>
        <position position="250"/>
    </location>
    <ligand>
        <name>Zn(2+)</name>
        <dbReference type="ChEBI" id="CHEBI:29105"/>
        <label>2</label>
        <note>catalytic</note>
    </ligand>
</feature>
<organism>
    <name type="scientific">Pyrobaculum islandicum (strain DSM 4184 / JCM 9189 / GEO3)</name>
    <dbReference type="NCBI Taxonomy" id="384616"/>
    <lineage>
        <taxon>Archaea</taxon>
        <taxon>Thermoproteota</taxon>
        <taxon>Thermoprotei</taxon>
        <taxon>Thermoproteales</taxon>
        <taxon>Thermoproteaceae</taxon>
        <taxon>Pyrobaculum</taxon>
    </lineage>
</organism>
<accession>A1RRK1</accession>
<evidence type="ECO:0000255" key="1">
    <source>
        <dbReference type="HAMAP-Rule" id="MF_01818"/>
    </source>
</evidence>
<sequence length="287" mass="31770">MPLLKLVFLGTGGAVPKSDRMLPTIYLEDWLGHRVLLDAGEGAQYRLLQIDVSPASLTLVAITHQHEDHTLGLPGLVITNKFLGGKLKVLAPRSMHKILERLGVEVSDSYEEGRFKITCVEVCHTVDACGWLFQWDVGYKLDLSKVAGLPKWALTNLIRGEAVKVGGRLITPEEVADLTHKRFRRLLYTGDTAPCPQMWKTVGEVDVLIHEATFADDVEPQKAHDEGHSTVADAVEAAKTLKADVLILTHISARYPSKERHKALADAVKPPPHIYIPDDFDTLLIKL</sequence>
<keyword id="KW-0255">Endonuclease</keyword>
<keyword id="KW-0378">Hydrolase</keyword>
<keyword id="KW-0479">Metal-binding</keyword>
<keyword id="KW-0540">Nuclease</keyword>
<keyword id="KW-0819">tRNA processing</keyword>
<keyword id="KW-0862">Zinc</keyword>
<reference key="1">
    <citation type="submission" date="2006-12" db="EMBL/GenBank/DDBJ databases">
        <title>Complete sequence of Pyrobaculum islandicum DSM 4184.</title>
        <authorList>
            <person name="Copeland A."/>
            <person name="Lucas S."/>
            <person name="Lapidus A."/>
            <person name="Barry K."/>
            <person name="Detter J.C."/>
            <person name="Glavina del Rio T."/>
            <person name="Dalin E."/>
            <person name="Tice H."/>
            <person name="Pitluck S."/>
            <person name="Meincke L."/>
            <person name="Brettin T."/>
            <person name="Bruce D."/>
            <person name="Han C."/>
            <person name="Tapia R."/>
            <person name="Gilna P."/>
            <person name="Schmutz J."/>
            <person name="Larimer F."/>
            <person name="Land M."/>
            <person name="Hauser L."/>
            <person name="Kyrpides N."/>
            <person name="Mikhailova N."/>
            <person name="Cozen A.E."/>
            <person name="Fitz-Gibbon S.T."/>
            <person name="House C.H."/>
            <person name="Saltikov C."/>
            <person name="Lowe T."/>
            <person name="Richardson P."/>
        </authorList>
    </citation>
    <scope>NUCLEOTIDE SEQUENCE [LARGE SCALE GENOMIC DNA]</scope>
    <source>
        <strain>DSM 4184 / JCM 9189 / GEO3</strain>
    </source>
</reference>
<protein>
    <recommendedName>
        <fullName evidence="1">Ribonuclease Z</fullName>
        <shortName evidence="1">RNase Z</shortName>
        <ecNumber evidence="1">3.1.26.11</ecNumber>
    </recommendedName>
    <alternativeName>
        <fullName evidence="1">tRNA 3 endonuclease</fullName>
    </alternativeName>
    <alternativeName>
        <fullName evidence="1">tRNase Z</fullName>
    </alternativeName>
</protein>
<proteinExistence type="inferred from homology"/>
<name>RNZ_PYRIL</name>